<dbReference type="EMBL" id="CU329670">
    <property type="protein sequence ID" value="CAB11210.1"/>
    <property type="molecule type" value="Genomic_DNA"/>
</dbReference>
<dbReference type="PIR" id="T37867">
    <property type="entry name" value="T37867"/>
</dbReference>
<dbReference type="RefSeq" id="NP_593571.1">
    <property type="nucleotide sequence ID" value="NM_001019003.2"/>
</dbReference>
<dbReference type="SMR" id="O13798"/>
<dbReference type="BioGRID" id="278663">
    <property type="interactions" value="3"/>
</dbReference>
<dbReference type="STRING" id="284812.O13798"/>
<dbReference type="iPTMnet" id="O13798"/>
<dbReference type="PaxDb" id="4896-SPAC17H9.01.1"/>
<dbReference type="EnsemblFungi" id="SPAC17H9.01.1">
    <property type="protein sequence ID" value="SPAC17H9.01.1:pep"/>
    <property type="gene ID" value="SPAC17H9.01"/>
</dbReference>
<dbReference type="GeneID" id="2542188"/>
<dbReference type="KEGG" id="spo:2542188"/>
<dbReference type="PomBase" id="SPAC17H9.01">
    <property type="gene designation" value="cid16"/>
</dbReference>
<dbReference type="VEuPathDB" id="FungiDB:SPAC17H9.01"/>
<dbReference type="eggNOG" id="KOG2277">
    <property type="taxonomic scope" value="Eukaryota"/>
</dbReference>
<dbReference type="HOGENOM" id="CLU_278879_0_0_1"/>
<dbReference type="InParanoid" id="O13798"/>
<dbReference type="OMA" id="YEMERAY"/>
<dbReference type="PRO" id="PR:O13798"/>
<dbReference type="Proteomes" id="UP000002485">
    <property type="component" value="Chromosome I"/>
</dbReference>
<dbReference type="GO" id="GO:0005737">
    <property type="term" value="C:cytoplasm"/>
    <property type="evidence" value="ECO:0007005"/>
    <property type="project" value="PomBase"/>
</dbReference>
<dbReference type="GO" id="GO:0005739">
    <property type="term" value="C:mitochondrion"/>
    <property type="evidence" value="ECO:0007669"/>
    <property type="project" value="GOC"/>
</dbReference>
<dbReference type="GO" id="GO:0050265">
    <property type="term" value="F:RNA uridylyltransferase activity"/>
    <property type="evidence" value="ECO:0000314"/>
    <property type="project" value="PomBase"/>
</dbReference>
<dbReference type="GO" id="GO:0000957">
    <property type="term" value="P:mitochondrial RNA catabolic process"/>
    <property type="evidence" value="ECO:0000315"/>
    <property type="project" value="PomBase"/>
</dbReference>
<dbReference type="GO" id="GO:0000289">
    <property type="term" value="P:nuclear-transcribed mRNA poly(A) tail shortening"/>
    <property type="evidence" value="ECO:0000250"/>
    <property type="project" value="PomBase"/>
</dbReference>
<dbReference type="GO" id="GO:1990074">
    <property type="term" value="P:polyuridylation-dependent mRNA catabolic process"/>
    <property type="evidence" value="ECO:0000315"/>
    <property type="project" value="PomBase"/>
</dbReference>
<dbReference type="GO" id="GO:0031123">
    <property type="term" value="P:RNA 3'-end processing"/>
    <property type="evidence" value="ECO:0000318"/>
    <property type="project" value="GO_Central"/>
</dbReference>
<dbReference type="GO" id="GO:0140746">
    <property type="term" value="P:siRNA catabolic process"/>
    <property type="evidence" value="ECO:0000315"/>
    <property type="project" value="PomBase"/>
</dbReference>
<dbReference type="CDD" id="cd05402">
    <property type="entry name" value="NT_PAP_TUTase"/>
    <property type="match status" value="1"/>
</dbReference>
<dbReference type="FunFam" id="3.30.460.10:FF:000067">
    <property type="entry name" value="Terminal uridylyltransferase cid1"/>
    <property type="match status" value="1"/>
</dbReference>
<dbReference type="Gene3D" id="1.10.1410.10">
    <property type="match status" value="1"/>
</dbReference>
<dbReference type="Gene3D" id="3.30.460.10">
    <property type="entry name" value="Beta Polymerase, domain 2"/>
    <property type="match status" value="1"/>
</dbReference>
<dbReference type="InterPro" id="IPR054708">
    <property type="entry name" value="MTPAP-like_central"/>
</dbReference>
<dbReference type="InterPro" id="IPR043519">
    <property type="entry name" value="NT_sf"/>
</dbReference>
<dbReference type="PANTHER" id="PTHR12271:SF135">
    <property type="entry name" value="CAFFEINE-INDUCED PROTEIN 16"/>
    <property type="match status" value="1"/>
</dbReference>
<dbReference type="PANTHER" id="PTHR12271">
    <property type="entry name" value="POLY A POLYMERASE CID PAP -RELATED"/>
    <property type="match status" value="1"/>
</dbReference>
<dbReference type="Pfam" id="PF22600">
    <property type="entry name" value="MTPAP-like_central"/>
    <property type="match status" value="1"/>
</dbReference>
<dbReference type="SUPFAM" id="SSF81301">
    <property type="entry name" value="Nucleotidyltransferase"/>
    <property type="match status" value="1"/>
</dbReference>
<dbReference type="SUPFAM" id="SSF81631">
    <property type="entry name" value="PAP/OAS1 substrate-binding domain"/>
    <property type="match status" value="1"/>
</dbReference>
<keyword id="KW-1185">Reference proteome</keyword>
<protein>
    <recommendedName>
        <fullName>Caffeine-induced protein 16</fullName>
    </recommendedName>
</protein>
<name>CID16_SCHPO</name>
<sequence length="1202" mass="138535">MLFAKLLLKPVQILFAYAKAKSKEISIKEANLLIFQDETDNLRKISTPNKLAVSLAGGLKALLSSNQLCHAFHYHNKKIRLVDTSLNNLPVPILLPKLINYLLARKSQKSAAEWEEIERALLSCCKRSKDPSILFPTDVPCSLDDDVSFLTFKGHKNHLENRSFFHDSESDNFKVVLSNCAINSKEDNNLVTEDRVNLGAKLLLVPVQNLIKLLKVSKISVDLAVIDHSFQDQKLTLEVGNGGLEVVKLFGGWIRILESECLGHVFSFKKTMKRKEVALVNRKADIDTTDLFIALRQLVDSKFKSYGIKAQKHAINRISKLGKMITSNHAEEKLTTIPITEAKKESVSNTALIARKNIIRERKYLSRMFDIFEHIDSYFNHEINMLLVDLLLEPLQVAFVYKNLARRWISLEEIENLWLKVFDSSHPLGKSITSTLQAIGTRKILTQLSINMIPRYNQDNCSAGDIYILCFSENCWLYSVLQKTIDHWVNENVELFYKKFEILKSLLIEDIANSTFSKEVSLNSSLRWYCVAILVTPLQLIINHLKDKTEMLSLDAVMTLILGKNTREVNSSIEELKITDCLSFLLEHNIFNTFLVYNEGIVKLNKDFDDFTPLNLLKCVNYSLMEFQKNSTFDMLEKLYEIGREIDMSKFSTLKYNLQLPNVDLLKESEAVSETKNTKNNTFILKSDLKEEERLTNFTIEEINKHKAIGVALRKLLEEADTSSNFSSSNNHVLDSSKHTVSSASTSSRKFIENYKSLESIGLTSFVKDNKLKASKELQKLIEENVFPKNLILFIFRKCVIGIKSFEKLQSYVFTYYCERYPKLILKRVLRFLEEIGFITSQYPRKLTDTGALFLKHPSEWGVLQHTFISSNFFENVPCYISLEQSLQNFQNDIRPDTVRTTAMKAIIKKLLKSLRKLEGPVKIACFGSYRTGLMTKNSDLDLVIYSSKEALLPYYDRVKSIIKNEFSNVMPIRGARIPIIKFTGQYNIHCDLSFDNLLPIHNSDLILNYSLIDERVKTLLMLVKYWASNRLIDKTHHAFPSSYTWCIMVIFYLQQIPEPILPNLQKLSTQYSKIVRDNDYGNVNCWFNRDTECYRGSMQKGRKNIALLLRGFFCYYGLTTQYSFDWEAYMIDISSSQLKRKSTEFKDCPFVVLDPFLKKKNLTKALTQKSVKVVRYELERACRILSDPKCNLDHLLDPLIQ</sequence>
<gene>
    <name type="primary">cid16</name>
    <name type="ORF">SPAC17H9.01</name>
</gene>
<accession>O13798</accession>
<organism>
    <name type="scientific">Schizosaccharomyces pombe (strain 972 / ATCC 24843)</name>
    <name type="common">Fission yeast</name>
    <dbReference type="NCBI Taxonomy" id="284812"/>
    <lineage>
        <taxon>Eukaryota</taxon>
        <taxon>Fungi</taxon>
        <taxon>Dikarya</taxon>
        <taxon>Ascomycota</taxon>
        <taxon>Taphrinomycotina</taxon>
        <taxon>Schizosaccharomycetes</taxon>
        <taxon>Schizosaccharomycetales</taxon>
        <taxon>Schizosaccharomycetaceae</taxon>
        <taxon>Schizosaccharomyces</taxon>
    </lineage>
</organism>
<proteinExistence type="predicted"/>
<feature type="chain" id="PRO_0000089747" description="Caffeine-induced protein 16">
    <location>
        <begin position="1"/>
        <end position="1202"/>
    </location>
</feature>
<feature type="domain" description="PAP-associated">
    <location>
        <begin position="1105"/>
        <end position="1159"/>
    </location>
</feature>
<reference key="1">
    <citation type="journal article" date="2002" name="Nature">
        <title>The genome sequence of Schizosaccharomyces pombe.</title>
        <authorList>
            <person name="Wood V."/>
            <person name="Gwilliam R."/>
            <person name="Rajandream M.A."/>
            <person name="Lyne M.H."/>
            <person name="Lyne R."/>
            <person name="Stewart A."/>
            <person name="Sgouros J.G."/>
            <person name="Peat N."/>
            <person name="Hayles J."/>
            <person name="Baker S.G."/>
            <person name="Basham D."/>
            <person name="Bowman S."/>
            <person name="Brooks K."/>
            <person name="Brown D."/>
            <person name="Brown S."/>
            <person name="Chillingworth T."/>
            <person name="Churcher C.M."/>
            <person name="Collins M."/>
            <person name="Connor R."/>
            <person name="Cronin A."/>
            <person name="Davis P."/>
            <person name="Feltwell T."/>
            <person name="Fraser A."/>
            <person name="Gentles S."/>
            <person name="Goble A."/>
            <person name="Hamlin N."/>
            <person name="Harris D.E."/>
            <person name="Hidalgo J."/>
            <person name="Hodgson G."/>
            <person name="Holroyd S."/>
            <person name="Hornsby T."/>
            <person name="Howarth S."/>
            <person name="Huckle E.J."/>
            <person name="Hunt S."/>
            <person name="Jagels K."/>
            <person name="James K.D."/>
            <person name="Jones L."/>
            <person name="Jones M."/>
            <person name="Leather S."/>
            <person name="McDonald S."/>
            <person name="McLean J."/>
            <person name="Mooney P."/>
            <person name="Moule S."/>
            <person name="Mungall K.L."/>
            <person name="Murphy L.D."/>
            <person name="Niblett D."/>
            <person name="Odell C."/>
            <person name="Oliver K."/>
            <person name="O'Neil S."/>
            <person name="Pearson D."/>
            <person name="Quail M.A."/>
            <person name="Rabbinowitsch E."/>
            <person name="Rutherford K.M."/>
            <person name="Rutter S."/>
            <person name="Saunders D."/>
            <person name="Seeger K."/>
            <person name="Sharp S."/>
            <person name="Skelton J."/>
            <person name="Simmonds M.N."/>
            <person name="Squares R."/>
            <person name="Squares S."/>
            <person name="Stevens K."/>
            <person name="Taylor K."/>
            <person name="Taylor R.G."/>
            <person name="Tivey A."/>
            <person name="Walsh S.V."/>
            <person name="Warren T."/>
            <person name="Whitehead S."/>
            <person name="Woodward J.R."/>
            <person name="Volckaert G."/>
            <person name="Aert R."/>
            <person name="Robben J."/>
            <person name="Grymonprez B."/>
            <person name="Weltjens I."/>
            <person name="Vanstreels E."/>
            <person name="Rieger M."/>
            <person name="Schaefer M."/>
            <person name="Mueller-Auer S."/>
            <person name="Gabel C."/>
            <person name="Fuchs M."/>
            <person name="Duesterhoeft A."/>
            <person name="Fritzc C."/>
            <person name="Holzer E."/>
            <person name="Moestl D."/>
            <person name="Hilbert H."/>
            <person name="Borzym K."/>
            <person name="Langer I."/>
            <person name="Beck A."/>
            <person name="Lehrach H."/>
            <person name="Reinhardt R."/>
            <person name="Pohl T.M."/>
            <person name="Eger P."/>
            <person name="Zimmermann W."/>
            <person name="Wedler H."/>
            <person name="Wambutt R."/>
            <person name="Purnelle B."/>
            <person name="Goffeau A."/>
            <person name="Cadieu E."/>
            <person name="Dreano S."/>
            <person name="Gloux S."/>
            <person name="Lelaure V."/>
            <person name="Mottier S."/>
            <person name="Galibert F."/>
            <person name="Aves S.J."/>
            <person name="Xiang Z."/>
            <person name="Hunt C."/>
            <person name="Moore K."/>
            <person name="Hurst S.M."/>
            <person name="Lucas M."/>
            <person name="Rochet M."/>
            <person name="Gaillardin C."/>
            <person name="Tallada V.A."/>
            <person name="Garzon A."/>
            <person name="Thode G."/>
            <person name="Daga R.R."/>
            <person name="Cruzado L."/>
            <person name="Jimenez J."/>
            <person name="Sanchez M."/>
            <person name="del Rey F."/>
            <person name="Benito J."/>
            <person name="Dominguez A."/>
            <person name="Revuelta J.L."/>
            <person name="Moreno S."/>
            <person name="Armstrong J."/>
            <person name="Forsburg S.L."/>
            <person name="Cerutti L."/>
            <person name="Lowe T."/>
            <person name="McCombie W.R."/>
            <person name="Paulsen I."/>
            <person name="Potashkin J."/>
            <person name="Shpakovski G.V."/>
            <person name="Ussery D."/>
            <person name="Barrell B.G."/>
            <person name="Nurse P."/>
        </authorList>
    </citation>
    <scope>NUCLEOTIDE SEQUENCE [LARGE SCALE GENOMIC DNA]</scope>
    <source>
        <strain>972 / ATCC 24843</strain>
    </source>
</reference>